<proteinExistence type="inferred from homology"/>
<dbReference type="EMBL" id="CM000160">
    <property type="protein sequence ID" value="EDW98031.1"/>
    <property type="molecule type" value="Genomic_DNA"/>
</dbReference>
<dbReference type="SMR" id="B4PMC6"/>
<dbReference type="GeneID" id="6537778"/>
<dbReference type="KEGG" id="dya:Dyak_GE10317"/>
<dbReference type="CTD" id="42670"/>
<dbReference type="eggNOG" id="KOG0464">
    <property type="taxonomic scope" value="Eukaryota"/>
</dbReference>
<dbReference type="HOGENOM" id="CLU_002794_4_1_1"/>
<dbReference type="OMA" id="GPQFTFP"/>
<dbReference type="OrthoDB" id="198619at2759"/>
<dbReference type="PhylomeDB" id="B4PMC6"/>
<dbReference type="Proteomes" id="UP000002282">
    <property type="component" value="Chromosome 3R"/>
</dbReference>
<dbReference type="GO" id="GO:0005739">
    <property type="term" value="C:mitochondrion"/>
    <property type="evidence" value="ECO:0007669"/>
    <property type="project" value="UniProtKB-SubCell"/>
</dbReference>
<dbReference type="GO" id="GO:0005525">
    <property type="term" value="F:GTP binding"/>
    <property type="evidence" value="ECO:0007669"/>
    <property type="project" value="UniProtKB-UniRule"/>
</dbReference>
<dbReference type="GO" id="GO:0003924">
    <property type="term" value="F:GTPase activity"/>
    <property type="evidence" value="ECO:0000250"/>
    <property type="project" value="UniProtKB"/>
</dbReference>
<dbReference type="GO" id="GO:0032543">
    <property type="term" value="P:mitochondrial translation"/>
    <property type="evidence" value="ECO:0000250"/>
    <property type="project" value="UniProtKB"/>
</dbReference>
<dbReference type="GO" id="GO:0032790">
    <property type="term" value="P:ribosome disassembly"/>
    <property type="evidence" value="ECO:0000250"/>
    <property type="project" value="UniProtKB"/>
</dbReference>
<dbReference type="CDD" id="cd16262">
    <property type="entry name" value="EFG_III"/>
    <property type="match status" value="1"/>
</dbReference>
<dbReference type="CDD" id="cd03713">
    <property type="entry name" value="EFG_mtEFG_C"/>
    <property type="match status" value="1"/>
</dbReference>
<dbReference type="FunFam" id="3.30.70.240:FF:000001">
    <property type="entry name" value="Elongation factor G"/>
    <property type="match status" value="1"/>
</dbReference>
<dbReference type="FunFam" id="3.30.230.10:FF:000033">
    <property type="entry name" value="Ribosome-releasing factor 2, mitochondrial"/>
    <property type="match status" value="1"/>
</dbReference>
<dbReference type="FunFam" id="3.30.70.870:FF:000005">
    <property type="entry name" value="Ribosome-releasing factor 2, mitochondrial"/>
    <property type="match status" value="1"/>
</dbReference>
<dbReference type="FunFam" id="3.40.50.300:FF:000514">
    <property type="entry name" value="Ribosome-releasing factor 2, mitochondrial"/>
    <property type="match status" value="1"/>
</dbReference>
<dbReference type="Gene3D" id="3.30.230.10">
    <property type="match status" value="1"/>
</dbReference>
<dbReference type="Gene3D" id="3.30.70.240">
    <property type="match status" value="1"/>
</dbReference>
<dbReference type="Gene3D" id="3.30.70.870">
    <property type="entry name" value="Elongation Factor G (Translational Gtpase), domain 3"/>
    <property type="match status" value="1"/>
</dbReference>
<dbReference type="Gene3D" id="3.40.50.300">
    <property type="entry name" value="P-loop containing nucleotide triphosphate hydrolases"/>
    <property type="match status" value="1"/>
</dbReference>
<dbReference type="Gene3D" id="2.40.30.10">
    <property type="entry name" value="Translation factors"/>
    <property type="match status" value="1"/>
</dbReference>
<dbReference type="HAMAP" id="MF_03059">
    <property type="entry name" value="mEF_G_2"/>
    <property type="match status" value="1"/>
</dbReference>
<dbReference type="InterPro" id="IPR053905">
    <property type="entry name" value="EF-G-like_DII"/>
</dbReference>
<dbReference type="InterPro" id="IPR030851">
    <property type="entry name" value="EFG2"/>
</dbReference>
<dbReference type="InterPro" id="IPR041095">
    <property type="entry name" value="EFG_II"/>
</dbReference>
<dbReference type="InterPro" id="IPR009022">
    <property type="entry name" value="EFG_III"/>
</dbReference>
<dbReference type="InterPro" id="IPR035647">
    <property type="entry name" value="EFG_III/V"/>
</dbReference>
<dbReference type="InterPro" id="IPR035649">
    <property type="entry name" value="EFG_V"/>
</dbReference>
<dbReference type="InterPro" id="IPR000640">
    <property type="entry name" value="EFG_V-like"/>
</dbReference>
<dbReference type="InterPro" id="IPR031157">
    <property type="entry name" value="G_TR_CS"/>
</dbReference>
<dbReference type="InterPro" id="IPR027417">
    <property type="entry name" value="P-loop_NTPase"/>
</dbReference>
<dbReference type="InterPro" id="IPR020568">
    <property type="entry name" value="Ribosomal_Su5_D2-typ_SF"/>
</dbReference>
<dbReference type="InterPro" id="IPR014721">
    <property type="entry name" value="Ribsml_uS5_D2-typ_fold_subgr"/>
</dbReference>
<dbReference type="InterPro" id="IPR005225">
    <property type="entry name" value="Small_GTP-bd"/>
</dbReference>
<dbReference type="InterPro" id="IPR000795">
    <property type="entry name" value="T_Tr_GTP-bd_dom"/>
</dbReference>
<dbReference type="InterPro" id="IPR009000">
    <property type="entry name" value="Transl_B-barrel_sf"/>
</dbReference>
<dbReference type="NCBIfam" id="TIGR00231">
    <property type="entry name" value="small_GTP"/>
    <property type="match status" value="1"/>
</dbReference>
<dbReference type="PANTHER" id="PTHR43261:SF1">
    <property type="entry name" value="RIBOSOME-RELEASING FACTOR 2, MITOCHONDRIAL"/>
    <property type="match status" value="1"/>
</dbReference>
<dbReference type="PANTHER" id="PTHR43261">
    <property type="entry name" value="TRANSLATION ELONGATION FACTOR G-RELATED"/>
    <property type="match status" value="1"/>
</dbReference>
<dbReference type="Pfam" id="PF22042">
    <property type="entry name" value="EF-G_D2"/>
    <property type="match status" value="1"/>
</dbReference>
<dbReference type="Pfam" id="PF00679">
    <property type="entry name" value="EFG_C"/>
    <property type="match status" value="1"/>
</dbReference>
<dbReference type="Pfam" id="PF14492">
    <property type="entry name" value="EFG_III"/>
    <property type="match status" value="1"/>
</dbReference>
<dbReference type="Pfam" id="PF00009">
    <property type="entry name" value="GTP_EFTU"/>
    <property type="match status" value="1"/>
</dbReference>
<dbReference type="PRINTS" id="PR00315">
    <property type="entry name" value="ELONGATNFCT"/>
</dbReference>
<dbReference type="SMART" id="SM00838">
    <property type="entry name" value="EFG_C"/>
    <property type="match status" value="1"/>
</dbReference>
<dbReference type="SUPFAM" id="SSF54980">
    <property type="entry name" value="EF-G C-terminal domain-like"/>
    <property type="match status" value="2"/>
</dbReference>
<dbReference type="SUPFAM" id="SSF52540">
    <property type="entry name" value="P-loop containing nucleoside triphosphate hydrolases"/>
    <property type="match status" value="1"/>
</dbReference>
<dbReference type="SUPFAM" id="SSF54211">
    <property type="entry name" value="Ribosomal protein S5 domain 2-like"/>
    <property type="match status" value="1"/>
</dbReference>
<dbReference type="SUPFAM" id="SSF50447">
    <property type="entry name" value="Translation proteins"/>
    <property type="match status" value="1"/>
</dbReference>
<dbReference type="PROSITE" id="PS00301">
    <property type="entry name" value="G_TR_1"/>
    <property type="match status" value="1"/>
</dbReference>
<dbReference type="PROSITE" id="PS51722">
    <property type="entry name" value="G_TR_2"/>
    <property type="match status" value="1"/>
</dbReference>
<protein>
    <recommendedName>
        <fullName evidence="2">Ribosome-releasing factor 2, mitochondrial</fullName>
        <shortName evidence="2">RRF2mt</shortName>
    </recommendedName>
    <alternativeName>
        <fullName evidence="2">Elongation factor G 2, mitochondrial</fullName>
        <shortName evidence="2">EF-G2mt</shortName>
        <shortName evidence="2">mEF-G 2</shortName>
    </alternativeName>
</protein>
<keyword id="KW-0342">GTP-binding</keyword>
<keyword id="KW-0496">Mitochondrion</keyword>
<keyword id="KW-0547">Nucleotide-binding</keyword>
<keyword id="KW-0648">Protein biosynthesis</keyword>
<keyword id="KW-0809">Transit peptide</keyword>
<accession>B4PMC6</accession>
<sequence>MLRCAWQNGPRQSNRWLRHLSNQIWKRSYSSKIRNIGILAHIDAGKTTTTERMLFYAGKTRALGEVHRGNTVTDYLTQERERGITICSSAVTFPWNDHRINLLDTPGHIDFTMEVEQSLFAVDGVVVVLDGTAGVEAQTVTVWSQADKHKLPRLIFVNKMDRPDADFDKCVADLKDKLETQPVCLQYPVKNEDGVLAINDVITLERLSWHQKDLGRSYKNVKLEPSDDLRQLQEKRSELIDQLSGLDDELADVVISTESFDKVDNALIERALRRATTQQKVVPVLLGSAYKNVGIQRLMDAVNSYLPAPEERNQIYDCFGTEVAGKVFKIVHDKQRGPLTLIRILRGEIKRGMRLISARGQAEVVSKLYEPLADEYREVSAVQSGDVVICAGLKSTVTDEEDDELDESDELFAIDPQIPDAVYFCSIEPPSVSSQTAMEQALKQLQREDPSLRVSYDSVTGQTVLGGMGELHMDIIKSRILSEYKIDVDLGPLQIAYKETIESPALTTLSVEKEIAGSKQSVSITLEVVKNQAEMFSLDKSPENLPNLNTLRPRILQVLRKGSISALERGPRVGGQVVETQIRLHNATIGRGTADSFVMATAAQCVQKLLSTSGTRLLEPIMALQIVAPSERISGIMADLSRRRALINDVLPKGERNKMILVNAPLAELSGYSSALRTISSGTASMTMQPCGFSSMNSVDESLAERRAQGLE</sequence>
<feature type="transit peptide" description="Mitochondrion" evidence="2">
    <location>
        <begin position="1"/>
        <end position="29"/>
    </location>
</feature>
<feature type="chain" id="PRO_0000385607" description="Ribosome-releasing factor 2, mitochondrial">
    <location>
        <begin position="30"/>
        <end position="712"/>
    </location>
</feature>
<feature type="domain" description="tr-type G">
    <location>
        <begin position="31"/>
        <end position="310"/>
    </location>
</feature>
<feature type="binding site" evidence="2">
    <location>
        <begin position="40"/>
        <end position="47"/>
    </location>
    <ligand>
        <name>GTP</name>
        <dbReference type="ChEBI" id="CHEBI:37565"/>
    </ligand>
</feature>
<feature type="binding site" evidence="2">
    <location>
        <begin position="104"/>
        <end position="108"/>
    </location>
    <ligand>
        <name>GTP</name>
        <dbReference type="ChEBI" id="CHEBI:37565"/>
    </ligand>
</feature>
<feature type="binding site" evidence="2">
    <location>
        <begin position="158"/>
        <end position="161"/>
    </location>
    <ligand>
        <name>GTP</name>
        <dbReference type="ChEBI" id="CHEBI:37565"/>
    </ligand>
</feature>
<organism>
    <name type="scientific">Drosophila yakuba</name>
    <name type="common">Fruit fly</name>
    <dbReference type="NCBI Taxonomy" id="7245"/>
    <lineage>
        <taxon>Eukaryota</taxon>
        <taxon>Metazoa</taxon>
        <taxon>Ecdysozoa</taxon>
        <taxon>Arthropoda</taxon>
        <taxon>Hexapoda</taxon>
        <taxon>Insecta</taxon>
        <taxon>Pterygota</taxon>
        <taxon>Neoptera</taxon>
        <taxon>Endopterygota</taxon>
        <taxon>Diptera</taxon>
        <taxon>Brachycera</taxon>
        <taxon>Muscomorpha</taxon>
        <taxon>Ephydroidea</taxon>
        <taxon>Drosophilidae</taxon>
        <taxon>Drosophila</taxon>
        <taxon>Sophophora</taxon>
    </lineage>
</organism>
<comment type="function">
    <text evidence="2">Mitochondrial GTPase that mediates the disassembly of ribosomes from messenger RNA at the termination of mitochondrial protein biosynthesis. Not involved in the GTP-dependent ribosomal translocation step during translation elongation.</text>
</comment>
<comment type="subcellular location">
    <subcellularLocation>
        <location evidence="2">Mitochondrion</location>
    </subcellularLocation>
</comment>
<comment type="similarity">
    <text evidence="2">Belongs to the TRAFAC class translation factor GTPase superfamily. Classic translation factor GTPase family. EF-G/EF-2 subfamily.</text>
</comment>
<name>RRF2M_DROYA</name>
<gene>
    <name evidence="1" type="primary">mRRF2</name>
    <name evidence="1" type="synonym">EF-G2</name>
    <name type="ORF">GE10317</name>
</gene>
<reference key="1">
    <citation type="journal article" date="2007" name="Nature">
        <title>Evolution of genes and genomes on the Drosophila phylogeny.</title>
        <authorList>
            <consortium name="Drosophila 12 genomes consortium"/>
        </authorList>
    </citation>
    <scope>NUCLEOTIDE SEQUENCE [LARGE SCALE GENOMIC DNA]</scope>
    <source>
        <strain>Tai18E2 / Tucson 14021-0261.01</strain>
    </source>
</reference>
<evidence type="ECO:0000250" key="1">
    <source>
        <dbReference type="UniProtKB" id="Q9VCX4"/>
    </source>
</evidence>
<evidence type="ECO:0000255" key="2">
    <source>
        <dbReference type="HAMAP-Rule" id="MF_03059"/>
    </source>
</evidence>